<accession>Q1ZXA4</accession>
<gene>
    <name type="primary">cyp508D1</name>
    <name type="ORF">DDB_G0292790</name>
</gene>
<keyword id="KW-0349">Heme</keyword>
<keyword id="KW-0408">Iron</keyword>
<keyword id="KW-0472">Membrane</keyword>
<keyword id="KW-0479">Metal-binding</keyword>
<keyword id="KW-0503">Monooxygenase</keyword>
<keyword id="KW-0560">Oxidoreductase</keyword>
<keyword id="KW-1185">Reference proteome</keyword>
<keyword id="KW-0812">Transmembrane</keyword>
<keyword id="KW-1133">Transmembrane helix</keyword>
<comment type="cofactor">
    <cofactor evidence="1">
        <name>heme</name>
        <dbReference type="ChEBI" id="CHEBI:30413"/>
    </cofactor>
</comment>
<comment type="subcellular location">
    <subcellularLocation>
        <location evidence="3">Membrane</location>
        <topology evidence="3">Single-pass membrane protein</topology>
    </subcellularLocation>
</comment>
<comment type="similarity">
    <text evidence="3">Belongs to the cytochrome P450 family.</text>
</comment>
<feature type="chain" id="PRO_0000318812" description="Probable cytochrome P450 508D1">
    <location>
        <begin position="1"/>
        <end position="482"/>
    </location>
</feature>
<feature type="transmembrane region" description="Helical" evidence="2">
    <location>
        <begin position="1"/>
        <end position="21"/>
    </location>
</feature>
<feature type="binding site" description="axial binding residue" evidence="1">
    <location>
        <position position="428"/>
    </location>
    <ligand>
        <name>heme</name>
        <dbReference type="ChEBI" id="CHEBI:30413"/>
    </ligand>
    <ligandPart>
        <name>Fe</name>
        <dbReference type="ChEBI" id="CHEBI:18248"/>
    </ligandPart>
</feature>
<protein>
    <recommendedName>
        <fullName>Probable cytochrome P450 508D1</fullName>
        <ecNumber>1.14.-.-</ecNumber>
    </recommendedName>
</protein>
<sequence length="482" mass="55635">MVYLKNILIFLIIFLINPLVKKNKKSTKENDLKGPIALPIIGNLFGLRNDTYSIMDFYHKMYGGIYRLWFGDYFVVSLNDPEIIREIFIKNYSNFSSRPFLPTITFGSFNYRGISGSNGDYWKRNRNLLLNAMKKSNLKQTYDNLSDSVNSLINLMKEFQSSNESFQPDMYLRKYALTTMFKYVFNETVSFENKIVQGEEAELIDNINEAFNFMTLGNAGDFFKILQPLYYQYLLYRGGCFNRIRTLIRNRYIEHRKTIDIENPRDLLDLLIIEYGDHSDENMISIVQVCFDVILAGVDTLASSLEWFLVMLCNNQQIQDTVYNELKETVVGPVVTLNDRPSTPYTMACIKETIRLKAPAPFGLPHTTDQDIIVKGHFIPKDSMVLINFYSLGRNPKDFPDPLKFDPNRFIGSTPDSFMPFGTGPRNCIGQALGMDQIYLLLSNIFLNFKITSENGKKLDDTDYVSGLNLKPAKYKVCLEKR</sequence>
<reference key="1">
    <citation type="journal article" date="2005" name="Nature">
        <title>The genome of the social amoeba Dictyostelium discoideum.</title>
        <authorList>
            <person name="Eichinger L."/>
            <person name="Pachebat J.A."/>
            <person name="Gloeckner G."/>
            <person name="Rajandream M.A."/>
            <person name="Sucgang R."/>
            <person name="Berriman M."/>
            <person name="Song J."/>
            <person name="Olsen R."/>
            <person name="Szafranski K."/>
            <person name="Xu Q."/>
            <person name="Tunggal B."/>
            <person name="Kummerfeld S."/>
            <person name="Madera M."/>
            <person name="Konfortov B.A."/>
            <person name="Rivero F."/>
            <person name="Bankier A.T."/>
            <person name="Lehmann R."/>
            <person name="Hamlin N."/>
            <person name="Davies R."/>
            <person name="Gaudet P."/>
            <person name="Fey P."/>
            <person name="Pilcher K."/>
            <person name="Chen G."/>
            <person name="Saunders D."/>
            <person name="Sodergren E.J."/>
            <person name="Davis P."/>
            <person name="Kerhornou A."/>
            <person name="Nie X."/>
            <person name="Hall N."/>
            <person name="Anjard C."/>
            <person name="Hemphill L."/>
            <person name="Bason N."/>
            <person name="Farbrother P."/>
            <person name="Desany B."/>
            <person name="Just E."/>
            <person name="Morio T."/>
            <person name="Rost R."/>
            <person name="Churcher C.M."/>
            <person name="Cooper J."/>
            <person name="Haydock S."/>
            <person name="van Driessche N."/>
            <person name="Cronin A."/>
            <person name="Goodhead I."/>
            <person name="Muzny D.M."/>
            <person name="Mourier T."/>
            <person name="Pain A."/>
            <person name="Lu M."/>
            <person name="Harper D."/>
            <person name="Lindsay R."/>
            <person name="Hauser H."/>
            <person name="James K.D."/>
            <person name="Quiles M."/>
            <person name="Madan Babu M."/>
            <person name="Saito T."/>
            <person name="Buchrieser C."/>
            <person name="Wardroper A."/>
            <person name="Felder M."/>
            <person name="Thangavelu M."/>
            <person name="Johnson D."/>
            <person name="Knights A."/>
            <person name="Loulseged H."/>
            <person name="Mungall K.L."/>
            <person name="Oliver K."/>
            <person name="Price C."/>
            <person name="Quail M.A."/>
            <person name="Urushihara H."/>
            <person name="Hernandez J."/>
            <person name="Rabbinowitsch E."/>
            <person name="Steffen D."/>
            <person name="Sanders M."/>
            <person name="Ma J."/>
            <person name="Kohara Y."/>
            <person name="Sharp S."/>
            <person name="Simmonds M.N."/>
            <person name="Spiegler S."/>
            <person name="Tivey A."/>
            <person name="Sugano S."/>
            <person name="White B."/>
            <person name="Walker D."/>
            <person name="Woodward J.R."/>
            <person name="Winckler T."/>
            <person name="Tanaka Y."/>
            <person name="Shaulsky G."/>
            <person name="Schleicher M."/>
            <person name="Weinstock G.M."/>
            <person name="Rosenthal A."/>
            <person name="Cox E.C."/>
            <person name="Chisholm R.L."/>
            <person name="Gibbs R.A."/>
            <person name="Loomis W.F."/>
            <person name="Platzer M."/>
            <person name="Kay R.R."/>
            <person name="Williams J.G."/>
            <person name="Dear P.H."/>
            <person name="Noegel A.A."/>
            <person name="Barrell B.G."/>
            <person name="Kuspa A."/>
        </authorList>
    </citation>
    <scope>NUCLEOTIDE SEQUENCE [LARGE SCALE GENOMIC DNA]</scope>
    <source>
        <strain>AX4</strain>
    </source>
</reference>
<name>C508D_DICDI</name>
<organism>
    <name type="scientific">Dictyostelium discoideum</name>
    <name type="common">Social amoeba</name>
    <dbReference type="NCBI Taxonomy" id="44689"/>
    <lineage>
        <taxon>Eukaryota</taxon>
        <taxon>Amoebozoa</taxon>
        <taxon>Evosea</taxon>
        <taxon>Eumycetozoa</taxon>
        <taxon>Dictyostelia</taxon>
        <taxon>Dictyosteliales</taxon>
        <taxon>Dictyosteliaceae</taxon>
        <taxon>Dictyostelium</taxon>
    </lineage>
</organism>
<evidence type="ECO:0000250" key="1"/>
<evidence type="ECO:0000255" key="2"/>
<evidence type="ECO:0000305" key="3"/>
<dbReference type="EC" id="1.14.-.-"/>
<dbReference type="EMBL" id="AAFI02000196">
    <property type="protein sequence ID" value="EAS66809.1"/>
    <property type="molecule type" value="Genomic_DNA"/>
</dbReference>
<dbReference type="RefSeq" id="XP_001134492.1">
    <property type="nucleotide sequence ID" value="XM_001134492.1"/>
</dbReference>
<dbReference type="SMR" id="Q1ZXA4"/>
<dbReference type="FunCoup" id="Q1ZXA4">
    <property type="interactions" value="6"/>
</dbReference>
<dbReference type="STRING" id="44689.Q1ZXA4"/>
<dbReference type="PaxDb" id="44689-DDB0232976"/>
<dbReference type="EnsemblProtists" id="EAS66809">
    <property type="protein sequence ID" value="EAS66809"/>
    <property type="gene ID" value="DDB_G0292790"/>
</dbReference>
<dbReference type="GeneID" id="8628857"/>
<dbReference type="KEGG" id="ddi:DDB_G0292790"/>
<dbReference type="dictyBase" id="DDB_G0292790">
    <property type="gene designation" value="cyp508D1"/>
</dbReference>
<dbReference type="VEuPathDB" id="AmoebaDB:DDB_G0292790"/>
<dbReference type="eggNOG" id="KOG0156">
    <property type="taxonomic scope" value="Eukaryota"/>
</dbReference>
<dbReference type="HOGENOM" id="CLU_001570_22_0_1"/>
<dbReference type="InParanoid" id="Q1ZXA4"/>
<dbReference type="OMA" id="QIRLGNC"/>
<dbReference type="PhylomeDB" id="Q1ZXA4"/>
<dbReference type="Reactome" id="R-DDI-211935">
    <property type="pathway name" value="Fatty acids"/>
</dbReference>
<dbReference type="Reactome" id="R-DDI-211945">
    <property type="pathway name" value="Phase I - Functionalization of compounds"/>
</dbReference>
<dbReference type="Reactome" id="R-DDI-211958">
    <property type="pathway name" value="Miscellaneous substrates"/>
</dbReference>
<dbReference type="Reactome" id="R-DDI-211981">
    <property type="pathway name" value="Xenobiotics"/>
</dbReference>
<dbReference type="Reactome" id="R-DDI-211999">
    <property type="pathway name" value="CYP2E1 reactions"/>
</dbReference>
<dbReference type="Reactome" id="R-DDI-2142670">
    <property type="pathway name" value="Synthesis of epoxy (EET) and dihydroxyeicosatrienoic acids (DHET)"/>
</dbReference>
<dbReference type="Reactome" id="R-DDI-2142816">
    <property type="pathway name" value="Synthesis of (16-20)-hydroxyeicosatetraenoic acids (HETE)"/>
</dbReference>
<dbReference type="Reactome" id="R-DDI-5423646">
    <property type="pathway name" value="Aflatoxin activation and detoxification"/>
</dbReference>
<dbReference type="Reactome" id="R-DDI-9027307">
    <property type="pathway name" value="Biosynthesis of maresin-like SPMs"/>
</dbReference>
<dbReference type="Reactome" id="R-DDI-9749641">
    <property type="pathway name" value="Aspirin ADME"/>
</dbReference>
<dbReference type="Reactome" id="R-DDI-9753281">
    <property type="pathway name" value="Paracetamol ADME"/>
</dbReference>
<dbReference type="PRO" id="PR:Q1ZXA4"/>
<dbReference type="Proteomes" id="UP000002195">
    <property type="component" value="Chromosome 6"/>
</dbReference>
<dbReference type="GO" id="GO:0016020">
    <property type="term" value="C:membrane"/>
    <property type="evidence" value="ECO:0007669"/>
    <property type="project" value="UniProtKB-SubCell"/>
</dbReference>
<dbReference type="GO" id="GO:0020037">
    <property type="term" value="F:heme binding"/>
    <property type="evidence" value="ECO:0007669"/>
    <property type="project" value="InterPro"/>
</dbReference>
<dbReference type="GO" id="GO:0005506">
    <property type="term" value="F:iron ion binding"/>
    <property type="evidence" value="ECO:0007669"/>
    <property type="project" value="InterPro"/>
</dbReference>
<dbReference type="GO" id="GO:0004497">
    <property type="term" value="F:monooxygenase activity"/>
    <property type="evidence" value="ECO:0007669"/>
    <property type="project" value="UniProtKB-KW"/>
</dbReference>
<dbReference type="GO" id="GO:0016705">
    <property type="term" value="F:oxidoreductase activity, acting on paired donors, with incorporation or reduction of molecular oxygen"/>
    <property type="evidence" value="ECO:0007669"/>
    <property type="project" value="InterPro"/>
</dbReference>
<dbReference type="CDD" id="cd20617">
    <property type="entry name" value="CYP1_2-like"/>
    <property type="match status" value="1"/>
</dbReference>
<dbReference type="FunFam" id="1.10.630.10:FF:000068">
    <property type="entry name" value="Probable cytochrome P450 508A2"/>
    <property type="match status" value="1"/>
</dbReference>
<dbReference type="Gene3D" id="1.10.630.10">
    <property type="entry name" value="Cytochrome P450"/>
    <property type="match status" value="1"/>
</dbReference>
<dbReference type="InterPro" id="IPR001128">
    <property type="entry name" value="Cyt_P450"/>
</dbReference>
<dbReference type="InterPro" id="IPR017972">
    <property type="entry name" value="Cyt_P450_CS"/>
</dbReference>
<dbReference type="InterPro" id="IPR002401">
    <property type="entry name" value="Cyt_P450_E_grp-I"/>
</dbReference>
<dbReference type="InterPro" id="IPR036396">
    <property type="entry name" value="Cyt_P450_sf"/>
</dbReference>
<dbReference type="PANTHER" id="PTHR24303:SF31">
    <property type="entry name" value="CYTOCHROME P450 307A1-RELATED"/>
    <property type="match status" value="1"/>
</dbReference>
<dbReference type="PANTHER" id="PTHR24303">
    <property type="entry name" value="HEME-BINDING MONOOXYGENASE FAMILY"/>
    <property type="match status" value="1"/>
</dbReference>
<dbReference type="Pfam" id="PF00067">
    <property type="entry name" value="p450"/>
    <property type="match status" value="1"/>
</dbReference>
<dbReference type="PRINTS" id="PR00463">
    <property type="entry name" value="EP450I"/>
</dbReference>
<dbReference type="PRINTS" id="PR00385">
    <property type="entry name" value="P450"/>
</dbReference>
<dbReference type="SUPFAM" id="SSF48264">
    <property type="entry name" value="Cytochrome P450"/>
    <property type="match status" value="1"/>
</dbReference>
<dbReference type="PROSITE" id="PS00086">
    <property type="entry name" value="CYTOCHROME_P450"/>
    <property type="match status" value="1"/>
</dbReference>
<proteinExistence type="inferred from homology"/>